<protein>
    <recommendedName>
        <fullName evidence="1">Dual-specificity RNA methyltransferase RlmN</fullName>
        <ecNumber evidence="1">2.1.1.192</ecNumber>
    </recommendedName>
    <alternativeName>
        <fullName evidence="1">23S rRNA (adenine(2503)-C(2))-methyltransferase</fullName>
    </alternativeName>
    <alternativeName>
        <fullName evidence="1">23S rRNA m2A2503 methyltransferase</fullName>
    </alternativeName>
    <alternativeName>
        <fullName evidence="1">Ribosomal RNA large subunit methyltransferase N</fullName>
    </alternativeName>
    <alternativeName>
        <fullName evidence="1">tRNA (adenine(37)-C(2))-methyltransferase</fullName>
    </alternativeName>
    <alternativeName>
        <fullName evidence="1">tRNA m2A37 methyltransferase</fullName>
    </alternativeName>
</protein>
<gene>
    <name evidence="1" type="primary">rlmN</name>
    <name type="ordered locus">xcc-b100_2282</name>
</gene>
<organism>
    <name type="scientific">Xanthomonas campestris pv. campestris (strain B100)</name>
    <dbReference type="NCBI Taxonomy" id="509169"/>
    <lineage>
        <taxon>Bacteria</taxon>
        <taxon>Pseudomonadati</taxon>
        <taxon>Pseudomonadota</taxon>
        <taxon>Gammaproteobacteria</taxon>
        <taxon>Lysobacterales</taxon>
        <taxon>Lysobacteraceae</taxon>
        <taxon>Xanthomonas</taxon>
    </lineage>
</organism>
<evidence type="ECO:0000255" key="1">
    <source>
        <dbReference type="HAMAP-Rule" id="MF_01849"/>
    </source>
</evidence>
<evidence type="ECO:0000255" key="2">
    <source>
        <dbReference type="PROSITE-ProRule" id="PRU01266"/>
    </source>
</evidence>
<name>RLMN_XANCB</name>
<keyword id="KW-0004">4Fe-4S</keyword>
<keyword id="KW-0963">Cytoplasm</keyword>
<keyword id="KW-1015">Disulfide bond</keyword>
<keyword id="KW-0408">Iron</keyword>
<keyword id="KW-0411">Iron-sulfur</keyword>
<keyword id="KW-0479">Metal-binding</keyword>
<keyword id="KW-0489">Methyltransferase</keyword>
<keyword id="KW-0698">rRNA processing</keyword>
<keyword id="KW-0949">S-adenosyl-L-methionine</keyword>
<keyword id="KW-0808">Transferase</keyword>
<keyword id="KW-0819">tRNA processing</keyword>
<proteinExistence type="inferred from homology"/>
<reference key="1">
    <citation type="journal article" date="2008" name="J. Biotechnol.">
        <title>The genome of Xanthomonas campestris pv. campestris B100 and its use for the reconstruction of metabolic pathways involved in xanthan biosynthesis.</title>
        <authorList>
            <person name="Vorhoelter F.-J."/>
            <person name="Schneiker S."/>
            <person name="Goesmann A."/>
            <person name="Krause L."/>
            <person name="Bekel T."/>
            <person name="Kaiser O."/>
            <person name="Linke B."/>
            <person name="Patschkowski T."/>
            <person name="Rueckert C."/>
            <person name="Schmid J."/>
            <person name="Sidhu V.K."/>
            <person name="Sieber V."/>
            <person name="Tauch A."/>
            <person name="Watt S.A."/>
            <person name="Weisshaar B."/>
            <person name="Becker A."/>
            <person name="Niehaus K."/>
            <person name="Puehler A."/>
        </authorList>
    </citation>
    <scope>NUCLEOTIDE SEQUENCE [LARGE SCALE GENOMIC DNA]</scope>
    <source>
        <strain>B100</strain>
    </source>
</reference>
<comment type="function">
    <text evidence="1">Specifically methylates position 2 of adenine 2503 in 23S rRNA and position 2 of adenine 37 in tRNAs. m2A2503 modification seems to play a crucial role in the proofreading step occurring at the peptidyl transferase center and thus would serve to optimize ribosomal fidelity.</text>
</comment>
<comment type="catalytic activity">
    <reaction evidence="1">
        <text>adenosine(2503) in 23S rRNA + 2 reduced [2Fe-2S]-[ferredoxin] + 2 S-adenosyl-L-methionine = 2-methyladenosine(2503) in 23S rRNA + 5'-deoxyadenosine + L-methionine + 2 oxidized [2Fe-2S]-[ferredoxin] + S-adenosyl-L-homocysteine</text>
        <dbReference type="Rhea" id="RHEA:42916"/>
        <dbReference type="Rhea" id="RHEA-COMP:10000"/>
        <dbReference type="Rhea" id="RHEA-COMP:10001"/>
        <dbReference type="Rhea" id="RHEA-COMP:10152"/>
        <dbReference type="Rhea" id="RHEA-COMP:10282"/>
        <dbReference type="ChEBI" id="CHEBI:17319"/>
        <dbReference type="ChEBI" id="CHEBI:33737"/>
        <dbReference type="ChEBI" id="CHEBI:33738"/>
        <dbReference type="ChEBI" id="CHEBI:57844"/>
        <dbReference type="ChEBI" id="CHEBI:57856"/>
        <dbReference type="ChEBI" id="CHEBI:59789"/>
        <dbReference type="ChEBI" id="CHEBI:74411"/>
        <dbReference type="ChEBI" id="CHEBI:74497"/>
        <dbReference type="EC" id="2.1.1.192"/>
    </reaction>
</comment>
<comment type="catalytic activity">
    <reaction evidence="1">
        <text>adenosine(37) in tRNA + 2 reduced [2Fe-2S]-[ferredoxin] + 2 S-adenosyl-L-methionine = 2-methyladenosine(37) in tRNA + 5'-deoxyadenosine + L-methionine + 2 oxidized [2Fe-2S]-[ferredoxin] + S-adenosyl-L-homocysteine</text>
        <dbReference type="Rhea" id="RHEA:43332"/>
        <dbReference type="Rhea" id="RHEA-COMP:10000"/>
        <dbReference type="Rhea" id="RHEA-COMP:10001"/>
        <dbReference type="Rhea" id="RHEA-COMP:10162"/>
        <dbReference type="Rhea" id="RHEA-COMP:10485"/>
        <dbReference type="ChEBI" id="CHEBI:17319"/>
        <dbReference type="ChEBI" id="CHEBI:33737"/>
        <dbReference type="ChEBI" id="CHEBI:33738"/>
        <dbReference type="ChEBI" id="CHEBI:57844"/>
        <dbReference type="ChEBI" id="CHEBI:57856"/>
        <dbReference type="ChEBI" id="CHEBI:59789"/>
        <dbReference type="ChEBI" id="CHEBI:74411"/>
        <dbReference type="ChEBI" id="CHEBI:74497"/>
        <dbReference type="EC" id="2.1.1.192"/>
    </reaction>
</comment>
<comment type="cofactor">
    <cofactor evidence="1">
        <name>[4Fe-4S] cluster</name>
        <dbReference type="ChEBI" id="CHEBI:49883"/>
    </cofactor>
    <text evidence="1">Binds 1 [4Fe-4S] cluster. The cluster is coordinated with 3 cysteines and an exchangeable S-adenosyl-L-methionine.</text>
</comment>
<comment type="subcellular location">
    <subcellularLocation>
        <location evidence="1">Cytoplasm</location>
    </subcellularLocation>
</comment>
<comment type="miscellaneous">
    <text evidence="1">Reaction proceeds by a ping-pong mechanism involving intermediate methylation of a conserved cysteine residue.</text>
</comment>
<comment type="similarity">
    <text evidence="1">Belongs to the radical SAM superfamily. RlmN family.</text>
</comment>
<accession>B0RT51</accession>
<feature type="chain" id="PRO_0000350528" description="Dual-specificity RNA methyltransferase RlmN">
    <location>
        <begin position="1"/>
        <end position="401"/>
    </location>
</feature>
<feature type="domain" description="Radical SAM core" evidence="2">
    <location>
        <begin position="120"/>
        <end position="365"/>
    </location>
</feature>
<feature type="active site" description="Proton acceptor" evidence="1">
    <location>
        <position position="114"/>
    </location>
</feature>
<feature type="active site" description="S-methylcysteine intermediate" evidence="1">
    <location>
        <position position="370"/>
    </location>
</feature>
<feature type="binding site" evidence="1">
    <location>
        <position position="134"/>
    </location>
    <ligand>
        <name>[4Fe-4S] cluster</name>
        <dbReference type="ChEBI" id="CHEBI:49883"/>
        <note>4Fe-4S-S-AdoMet</note>
    </ligand>
</feature>
<feature type="binding site" evidence="1">
    <location>
        <position position="138"/>
    </location>
    <ligand>
        <name>[4Fe-4S] cluster</name>
        <dbReference type="ChEBI" id="CHEBI:49883"/>
        <note>4Fe-4S-S-AdoMet</note>
    </ligand>
</feature>
<feature type="binding site" evidence="1">
    <location>
        <position position="141"/>
    </location>
    <ligand>
        <name>[4Fe-4S] cluster</name>
        <dbReference type="ChEBI" id="CHEBI:49883"/>
        <note>4Fe-4S-S-AdoMet</note>
    </ligand>
</feature>
<feature type="binding site" evidence="1">
    <location>
        <begin position="187"/>
        <end position="188"/>
    </location>
    <ligand>
        <name>S-adenosyl-L-methionine</name>
        <dbReference type="ChEBI" id="CHEBI:59789"/>
    </ligand>
</feature>
<feature type="binding site" evidence="1">
    <location>
        <position position="219"/>
    </location>
    <ligand>
        <name>S-adenosyl-L-methionine</name>
        <dbReference type="ChEBI" id="CHEBI:59789"/>
    </ligand>
</feature>
<feature type="binding site" evidence="1">
    <location>
        <begin position="241"/>
        <end position="243"/>
    </location>
    <ligand>
        <name>S-adenosyl-L-methionine</name>
        <dbReference type="ChEBI" id="CHEBI:59789"/>
    </ligand>
</feature>
<feature type="binding site" evidence="1">
    <location>
        <position position="327"/>
    </location>
    <ligand>
        <name>S-adenosyl-L-methionine</name>
        <dbReference type="ChEBI" id="CHEBI:59789"/>
    </ligand>
</feature>
<feature type="disulfide bond" description="(transient)" evidence="1">
    <location>
        <begin position="127"/>
        <end position="370"/>
    </location>
</feature>
<dbReference type="EC" id="2.1.1.192" evidence="1"/>
<dbReference type="EMBL" id="AM920689">
    <property type="protein sequence ID" value="CAP51637.1"/>
    <property type="molecule type" value="Genomic_DNA"/>
</dbReference>
<dbReference type="SMR" id="B0RT51"/>
<dbReference type="KEGG" id="xca:xcc-b100_2282"/>
<dbReference type="HOGENOM" id="CLU_029101_0_0_6"/>
<dbReference type="Proteomes" id="UP000001188">
    <property type="component" value="Chromosome"/>
</dbReference>
<dbReference type="GO" id="GO:0005737">
    <property type="term" value="C:cytoplasm"/>
    <property type="evidence" value="ECO:0007669"/>
    <property type="project" value="UniProtKB-SubCell"/>
</dbReference>
<dbReference type="GO" id="GO:0051539">
    <property type="term" value="F:4 iron, 4 sulfur cluster binding"/>
    <property type="evidence" value="ECO:0007669"/>
    <property type="project" value="UniProtKB-UniRule"/>
</dbReference>
<dbReference type="GO" id="GO:0046872">
    <property type="term" value="F:metal ion binding"/>
    <property type="evidence" value="ECO:0007669"/>
    <property type="project" value="UniProtKB-KW"/>
</dbReference>
<dbReference type="GO" id="GO:0070040">
    <property type="term" value="F:rRNA (adenine(2503)-C2-)-methyltransferase activity"/>
    <property type="evidence" value="ECO:0007669"/>
    <property type="project" value="UniProtKB-UniRule"/>
</dbReference>
<dbReference type="GO" id="GO:0019843">
    <property type="term" value="F:rRNA binding"/>
    <property type="evidence" value="ECO:0007669"/>
    <property type="project" value="UniProtKB-UniRule"/>
</dbReference>
<dbReference type="GO" id="GO:0002935">
    <property type="term" value="F:tRNA (adenine(37)-C2)-methyltransferase activity"/>
    <property type="evidence" value="ECO:0007669"/>
    <property type="project" value="UniProtKB-UniRule"/>
</dbReference>
<dbReference type="GO" id="GO:0000049">
    <property type="term" value="F:tRNA binding"/>
    <property type="evidence" value="ECO:0007669"/>
    <property type="project" value="UniProtKB-UniRule"/>
</dbReference>
<dbReference type="GO" id="GO:0070475">
    <property type="term" value="P:rRNA base methylation"/>
    <property type="evidence" value="ECO:0007669"/>
    <property type="project" value="UniProtKB-UniRule"/>
</dbReference>
<dbReference type="GO" id="GO:0030488">
    <property type="term" value="P:tRNA methylation"/>
    <property type="evidence" value="ECO:0007669"/>
    <property type="project" value="UniProtKB-UniRule"/>
</dbReference>
<dbReference type="CDD" id="cd01335">
    <property type="entry name" value="Radical_SAM"/>
    <property type="match status" value="1"/>
</dbReference>
<dbReference type="FunFam" id="1.10.150.530:FF:000003">
    <property type="entry name" value="Dual-specificity RNA methyltransferase RlmN"/>
    <property type="match status" value="1"/>
</dbReference>
<dbReference type="FunFam" id="3.20.20.70:FF:000008">
    <property type="entry name" value="Dual-specificity RNA methyltransferase RlmN"/>
    <property type="match status" value="1"/>
</dbReference>
<dbReference type="Gene3D" id="1.10.150.530">
    <property type="match status" value="1"/>
</dbReference>
<dbReference type="Gene3D" id="3.20.20.70">
    <property type="entry name" value="Aldolase class I"/>
    <property type="match status" value="1"/>
</dbReference>
<dbReference type="HAMAP" id="MF_01849">
    <property type="entry name" value="RNA_methyltr_RlmN"/>
    <property type="match status" value="1"/>
</dbReference>
<dbReference type="InterPro" id="IPR013785">
    <property type="entry name" value="Aldolase_TIM"/>
</dbReference>
<dbReference type="InterPro" id="IPR040072">
    <property type="entry name" value="Methyltransferase_A"/>
</dbReference>
<dbReference type="InterPro" id="IPR048641">
    <property type="entry name" value="RlmN_N"/>
</dbReference>
<dbReference type="InterPro" id="IPR027492">
    <property type="entry name" value="RNA_MTrfase_RlmN"/>
</dbReference>
<dbReference type="InterPro" id="IPR004383">
    <property type="entry name" value="rRNA_lsu_MTrfase_RlmN/Cfr"/>
</dbReference>
<dbReference type="InterPro" id="IPR007197">
    <property type="entry name" value="rSAM"/>
</dbReference>
<dbReference type="NCBIfam" id="TIGR00048">
    <property type="entry name" value="rRNA_mod_RlmN"/>
    <property type="match status" value="1"/>
</dbReference>
<dbReference type="PANTHER" id="PTHR30544">
    <property type="entry name" value="23S RRNA METHYLTRANSFERASE"/>
    <property type="match status" value="1"/>
</dbReference>
<dbReference type="PANTHER" id="PTHR30544:SF5">
    <property type="entry name" value="RADICAL SAM CORE DOMAIN-CONTAINING PROTEIN"/>
    <property type="match status" value="1"/>
</dbReference>
<dbReference type="Pfam" id="PF04055">
    <property type="entry name" value="Radical_SAM"/>
    <property type="match status" value="1"/>
</dbReference>
<dbReference type="Pfam" id="PF21016">
    <property type="entry name" value="RlmN_N"/>
    <property type="match status" value="1"/>
</dbReference>
<dbReference type="PIRSF" id="PIRSF006004">
    <property type="entry name" value="CHP00048"/>
    <property type="match status" value="1"/>
</dbReference>
<dbReference type="SFLD" id="SFLDF00275">
    <property type="entry name" value="adenosine_C2_methyltransferase"/>
    <property type="match status" value="1"/>
</dbReference>
<dbReference type="SFLD" id="SFLDG01062">
    <property type="entry name" value="methyltransferase_(Class_A)"/>
    <property type="match status" value="1"/>
</dbReference>
<dbReference type="SUPFAM" id="SSF102114">
    <property type="entry name" value="Radical SAM enzymes"/>
    <property type="match status" value="1"/>
</dbReference>
<dbReference type="PROSITE" id="PS51918">
    <property type="entry name" value="RADICAL_SAM"/>
    <property type="match status" value="1"/>
</dbReference>
<sequence>MNEVAIPSVLLDVPVPAATVHKQNLLDLDREGLEHFFADTLGEARYRAHQMMKWIHHRYVTDFDQMTDLGKALRAKLHQHAEVLVPNVVFDKPSTDGTHKWLLAMGTDGKNAIETVYIPDKGRGTLCVSSQVGCGLNCTFCSTATQGFNRNLTTAEIIGQVWVAARHLGNVPHQQRRLTNVVMMGMGEPLMNFDNVVRAMSVMRDDLGYGLASKRVTLSTSGLVPMIDRLATESDVSLAVSLHAANDALRESLVPLNKKYPIAELMESCARYLRGNKKRDSVTFEYTLMKGINDQPEHARQLARLMRQFDNAVQSKDAGKVNLIPFNPFPGTRYERSGETEIRAFQKILLDAQVLTMVRRTRGDDIDAACGQLKGQVMDRTRRQAEFRRTLEGQADRDAAA</sequence>